<comment type="function">
    <text evidence="2">S-adenosyl-L-methionine-dependent methyltransferase that catalyzes four methylations of the modified target histidine residue in translation elongation factor 2 (EF-2), to form an intermediate called diphthine methyl ester. The four successive methylation reactions represent the second step of diphthamide biosynthesis.</text>
</comment>
<comment type="catalytic activity">
    <reaction evidence="2">
        <text>2-[(3S)-amino-3-carboxypropyl]-L-histidyl-[translation elongation factor 2] + 4 S-adenosyl-L-methionine = diphthine methyl ester-[translation elongation factor 2] + 4 S-adenosyl-L-homocysteine + 3 H(+)</text>
        <dbReference type="Rhea" id="RHEA:42652"/>
        <dbReference type="Rhea" id="RHEA-COMP:9749"/>
        <dbReference type="Rhea" id="RHEA-COMP:10173"/>
        <dbReference type="ChEBI" id="CHEBI:15378"/>
        <dbReference type="ChEBI" id="CHEBI:57856"/>
        <dbReference type="ChEBI" id="CHEBI:59789"/>
        <dbReference type="ChEBI" id="CHEBI:73995"/>
        <dbReference type="ChEBI" id="CHEBI:79005"/>
        <dbReference type="EC" id="2.1.1.314"/>
    </reaction>
</comment>
<comment type="pathway">
    <text>Protein modification; peptidyl-diphthamide biosynthesis.</text>
</comment>
<comment type="similarity">
    <text evidence="4">Belongs to the diphthine synthase family.</text>
</comment>
<organism>
    <name type="scientific">Bos taurus</name>
    <name type="common">Bovine</name>
    <dbReference type="NCBI Taxonomy" id="9913"/>
    <lineage>
        <taxon>Eukaryota</taxon>
        <taxon>Metazoa</taxon>
        <taxon>Chordata</taxon>
        <taxon>Craniata</taxon>
        <taxon>Vertebrata</taxon>
        <taxon>Euteleostomi</taxon>
        <taxon>Mammalia</taxon>
        <taxon>Eutheria</taxon>
        <taxon>Laurasiatheria</taxon>
        <taxon>Artiodactyla</taxon>
        <taxon>Ruminantia</taxon>
        <taxon>Pecora</taxon>
        <taxon>Bovidae</taxon>
        <taxon>Bovinae</taxon>
        <taxon>Bos</taxon>
    </lineage>
</organism>
<proteinExistence type="evidence at transcript level"/>
<reference key="1">
    <citation type="journal article" date="2005" name="BMC Genomics">
        <title>Characterization of 954 bovine full-CDS cDNA sequences.</title>
        <authorList>
            <person name="Harhay G.P."/>
            <person name="Sonstegard T.S."/>
            <person name="Keele J.W."/>
            <person name="Heaton M.P."/>
            <person name="Clawson M.L."/>
            <person name="Snelling W.M."/>
            <person name="Wiedmann R.T."/>
            <person name="Van Tassell C.P."/>
            <person name="Smith T.P.L."/>
        </authorList>
    </citation>
    <scope>NUCLEOTIDE SEQUENCE [LARGE SCALE MRNA]</scope>
</reference>
<reference key="2">
    <citation type="submission" date="2006-02" db="EMBL/GenBank/DDBJ databases">
        <authorList>
            <consortium name="NIH - Mammalian Gene Collection (MGC) project"/>
        </authorList>
    </citation>
    <scope>NUCLEOTIDE SEQUENCE [LARGE SCALE MRNA]</scope>
    <source>
        <strain>Hereford</strain>
        <tissue>Uterus</tissue>
    </source>
</reference>
<accession>Q5E982</accession>
<accession>Q2HJ50</accession>
<evidence type="ECO:0000250" key="1"/>
<evidence type="ECO:0000250" key="2">
    <source>
        <dbReference type="UniProtKB" id="P32469"/>
    </source>
</evidence>
<evidence type="ECO:0000250" key="3">
    <source>
        <dbReference type="UniProtKB" id="Q9H2P9"/>
    </source>
</evidence>
<evidence type="ECO:0000305" key="4"/>
<feature type="chain" id="PRO_0000156132" description="Diphthine methyl ester synthase">
    <location>
        <begin position="1"/>
        <end position="285"/>
    </location>
</feature>
<feature type="binding site" evidence="1">
    <location>
        <position position="9"/>
    </location>
    <ligand>
        <name>S-adenosyl-L-methionine</name>
        <dbReference type="ChEBI" id="CHEBI:59789"/>
    </ligand>
</feature>
<feature type="binding site" evidence="1">
    <location>
        <position position="84"/>
    </location>
    <ligand>
        <name>S-adenosyl-L-methionine</name>
        <dbReference type="ChEBI" id="CHEBI:59789"/>
    </ligand>
</feature>
<feature type="binding site" evidence="1">
    <location>
        <position position="87"/>
    </location>
    <ligand>
        <name>S-adenosyl-L-methionine</name>
        <dbReference type="ChEBI" id="CHEBI:59789"/>
    </ligand>
</feature>
<feature type="binding site" evidence="1">
    <location>
        <begin position="112"/>
        <end position="113"/>
    </location>
    <ligand>
        <name>S-adenosyl-L-methionine</name>
        <dbReference type="ChEBI" id="CHEBI:59789"/>
    </ligand>
</feature>
<feature type="binding site" evidence="1">
    <location>
        <position position="163"/>
    </location>
    <ligand>
        <name>S-adenosyl-L-methionine</name>
        <dbReference type="ChEBI" id="CHEBI:59789"/>
    </ligand>
</feature>
<feature type="binding site" evidence="1">
    <location>
        <position position="225"/>
    </location>
    <ligand>
        <name>S-adenosyl-L-methionine</name>
        <dbReference type="ChEBI" id="CHEBI:59789"/>
    </ligand>
</feature>
<feature type="binding site" evidence="1">
    <location>
        <position position="250"/>
    </location>
    <ligand>
        <name>S-adenosyl-L-methionine</name>
        <dbReference type="ChEBI" id="CHEBI:59789"/>
    </ligand>
</feature>
<feature type="modified residue" description="Phosphoserine" evidence="3">
    <location>
        <position position="171"/>
    </location>
</feature>
<sequence length="285" mass="31662">MLYMIGLGLGDAKDITVKGLEVVRRCSRVYLETYTSVLTVGKEVLEEFYERKLILADREEVEQEADNILKDADISDVAFLVVGDPFGATTHSDLILRATKLGIPYRVIHNASIMNAVGCCGLQLYKFGETVSIVFWTDTWRPESFFDKVKKNRQNGMHTLCLLDIKVKEQSLENLIKGRKIYEPPRYMSVNQAAQQLLEIVQNQRIRGEEPAVTEETLCVGLARVGAEDQKIAAGTLQQMSTVDLGGPLHSLIITGGSLHPLEMEMLSLFTIPENSSEAQSIGGL</sequence>
<keyword id="KW-0489">Methyltransferase</keyword>
<keyword id="KW-0597">Phosphoprotein</keyword>
<keyword id="KW-1185">Reference proteome</keyword>
<keyword id="KW-0949">S-adenosyl-L-methionine</keyword>
<keyword id="KW-0808">Transferase</keyword>
<gene>
    <name type="primary">DPH5</name>
</gene>
<dbReference type="EC" id="2.1.1.314"/>
<dbReference type="EMBL" id="BT021038">
    <property type="protein sequence ID" value="AAX09055.1"/>
    <property type="molecule type" value="mRNA"/>
</dbReference>
<dbReference type="EMBL" id="BC113310">
    <property type="protein sequence ID" value="AAI13311.1"/>
    <property type="molecule type" value="mRNA"/>
</dbReference>
<dbReference type="RefSeq" id="NP_001070289.1">
    <property type="nucleotide sequence ID" value="NM_001076821.1"/>
</dbReference>
<dbReference type="RefSeq" id="XP_005204150.1">
    <property type="nucleotide sequence ID" value="XM_005204093.5"/>
</dbReference>
<dbReference type="RefSeq" id="XP_005204151.1">
    <property type="nucleotide sequence ID" value="XM_005204094.5"/>
</dbReference>
<dbReference type="RefSeq" id="XP_005204152.1">
    <property type="nucleotide sequence ID" value="XM_005204095.5"/>
</dbReference>
<dbReference type="RefSeq" id="XP_005204153.1">
    <property type="nucleotide sequence ID" value="XM_005204096.5"/>
</dbReference>
<dbReference type="SMR" id="Q5E982"/>
<dbReference type="FunCoup" id="Q5E982">
    <property type="interactions" value="3846"/>
</dbReference>
<dbReference type="STRING" id="9913.ENSBTAP00000025327"/>
<dbReference type="PaxDb" id="9913-ENSBTAP00000025327"/>
<dbReference type="Ensembl" id="ENSBTAT00000025326.4">
    <property type="protein sequence ID" value="ENSBTAP00000025326.3"/>
    <property type="gene ID" value="ENSBTAG00000019029.5"/>
</dbReference>
<dbReference type="GeneID" id="508904"/>
<dbReference type="KEGG" id="bta:508904"/>
<dbReference type="CTD" id="51611"/>
<dbReference type="VEuPathDB" id="HostDB:ENSBTAG00000019029"/>
<dbReference type="VGNC" id="VGNC:28180">
    <property type="gene designation" value="DPH5"/>
</dbReference>
<dbReference type="eggNOG" id="KOG3123">
    <property type="taxonomic scope" value="Eukaryota"/>
</dbReference>
<dbReference type="GeneTree" id="ENSGT00390000010568"/>
<dbReference type="HOGENOM" id="CLU_066040_1_0_1"/>
<dbReference type="InParanoid" id="Q5E982"/>
<dbReference type="OMA" id="HNASIMS"/>
<dbReference type="OrthoDB" id="2516at2759"/>
<dbReference type="TreeFam" id="TF105603"/>
<dbReference type="Reactome" id="R-BTA-5358493">
    <property type="pathway name" value="Synthesis of diphthamide-EEF2"/>
</dbReference>
<dbReference type="UniPathway" id="UPA00559"/>
<dbReference type="Proteomes" id="UP000009136">
    <property type="component" value="Chromosome 3"/>
</dbReference>
<dbReference type="Bgee" id="ENSBTAG00000019029">
    <property type="expression patterns" value="Expressed in oocyte and 109 other cell types or tissues"/>
</dbReference>
<dbReference type="GO" id="GO:0005829">
    <property type="term" value="C:cytosol"/>
    <property type="evidence" value="ECO:0007669"/>
    <property type="project" value="Ensembl"/>
</dbReference>
<dbReference type="GO" id="GO:0141133">
    <property type="term" value="F:diphthine methyl ester synthase activity"/>
    <property type="evidence" value="ECO:0007669"/>
    <property type="project" value="UniProtKB-EC"/>
</dbReference>
<dbReference type="GO" id="GO:0032259">
    <property type="term" value="P:methylation"/>
    <property type="evidence" value="ECO:0007669"/>
    <property type="project" value="UniProtKB-KW"/>
</dbReference>
<dbReference type="GO" id="GO:0017183">
    <property type="term" value="P:protein histidyl modification to diphthamide"/>
    <property type="evidence" value="ECO:0000250"/>
    <property type="project" value="UniProtKB"/>
</dbReference>
<dbReference type="CDD" id="cd11647">
    <property type="entry name" value="DHP5_DphB"/>
    <property type="match status" value="1"/>
</dbReference>
<dbReference type="FunFam" id="3.30.950.10:FF:000004">
    <property type="entry name" value="Diphthine synthase putative"/>
    <property type="match status" value="1"/>
</dbReference>
<dbReference type="FunFam" id="3.40.1010.10:FF:000004">
    <property type="entry name" value="Putative diphthine synthase"/>
    <property type="match status" value="1"/>
</dbReference>
<dbReference type="Gene3D" id="3.40.1010.10">
    <property type="entry name" value="Cobalt-precorrin-4 Transmethylase, Domain 1"/>
    <property type="match status" value="1"/>
</dbReference>
<dbReference type="Gene3D" id="3.30.950.10">
    <property type="entry name" value="Methyltransferase, Cobalt-precorrin-4 Transmethylase, Domain 2"/>
    <property type="match status" value="1"/>
</dbReference>
<dbReference type="HAMAP" id="MF_01084">
    <property type="entry name" value="Diphthine_synth"/>
    <property type="match status" value="1"/>
</dbReference>
<dbReference type="InterPro" id="IPR000878">
    <property type="entry name" value="4pyrrol_Mease"/>
</dbReference>
<dbReference type="InterPro" id="IPR035996">
    <property type="entry name" value="4pyrrol_Methylase_sf"/>
</dbReference>
<dbReference type="InterPro" id="IPR014777">
    <property type="entry name" value="4pyrrole_Mease_sub1"/>
</dbReference>
<dbReference type="InterPro" id="IPR014776">
    <property type="entry name" value="4pyrrole_Mease_sub2"/>
</dbReference>
<dbReference type="InterPro" id="IPR004551">
    <property type="entry name" value="Dphthn_synthase"/>
</dbReference>
<dbReference type="NCBIfam" id="TIGR00522">
    <property type="entry name" value="dph5"/>
    <property type="match status" value="1"/>
</dbReference>
<dbReference type="PANTHER" id="PTHR10882:SF0">
    <property type="entry name" value="DIPHTHINE METHYL ESTER SYNTHASE"/>
    <property type="match status" value="1"/>
</dbReference>
<dbReference type="PANTHER" id="PTHR10882">
    <property type="entry name" value="DIPHTHINE SYNTHASE"/>
    <property type="match status" value="1"/>
</dbReference>
<dbReference type="Pfam" id="PF00590">
    <property type="entry name" value="TP_methylase"/>
    <property type="match status" value="1"/>
</dbReference>
<dbReference type="PIRSF" id="PIRSF036432">
    <property type="entry name" value="Diphthine_synth"/>
    <property type="match status" value="1"/>
</dbReference>
<dbReference type="SUPFAM" id="SSF53790">
    <property type="entry name" value="Tetrapyrrole methylase"/>
    <property type="match status" value="1"/>
</dbReference>
<name>DPH5_BOVIN</name>
<protein>
    <recommendedName>
        <fullName>Diphthine methyl ester synthase</fullName>
        <ecNumber>2.1.1.314</ecNumber>
    </recommendedName>
    <alternativeName>
        <fullName>Diphthamide biosynthesis methyltransferase</fullName>
    </alternativeName>
</protein>